<keyword id="KW-0456">Lyase</keyword>
<keyword id="KW-1185">Reference proteome</keyword>
<reference key="1">
    <citation type="journal article" date="2005" name="PLoS Genet.">
        <title>Life in hot carbon monoxide: the complete genome sequence of Carboxydothermus hydrogenoformans Z-2901.</title>
        <authorList>
            <person name="Wu M."/>
            <person name="Ren Q."/>
            <person name="Durkin A.S."/>
            <person name="Daugherty S.C."/>
            <person name="Brinkac L.M."/>
            <person name="Dodson R.J."/>
            <person name="Madupu R."/>
            <person name="Sullivan S.A."/>
            <person name="Kolonay J.F."/>
            <person name="Nelson W.C."/>
            <person name="Tallon L.J."/>
            <person name="Jones K.M."/>
            <person name="Ulrich L.E."/>
            <person name="Gonzalez J.M."/>
            <person name="Zhulin I.B."/>
            <person name="Robb F.T."/>
            <person name="Eisen J.A."/>
        </authorList>
    </citation>
    <scope>NUCLEOTIDE SEQUENCE [LARGE SCALE GENOMIC DNA]</scope>
    <source>
        <strain>ATCC BAA-161 / DSM 6008 / Z-2901</strain>
    </source>
</reference>
<evidence type="ECO:0000255" key="1">
    <source>
        <dbReference type="HAMAP-Rule" id="MF_00549"/>
    </source>
</evidence>
<comment type="function">
    <text evidence="1">Catalyzes the formation of methylglyoxal from dihydroxyacetone phosphate.</text>
</comment>
<comment type="catalytic activity">
    <reaction evidence="1">
        <text>dihydroxyacetone phosphate = methylglyoxal + phosphate</text>
        <dbReference type="Rhea" id="RHEA:17937"/>
        <dbReference type="ChEBI" id="CHEBI:17158"/>
        <dbReference type="ChEBI" id="CHEBI:43474"/>
        <dbReference type="ChEBI" id="CHEBI:57642"/>
        <dbReference type="EC" id="4.2.3.3"/>
    </reaction>
</comment>
<comment type="similarity">
    <text evidence="1">Belongs to the methylglyoxal synthase family.</text>
</comment>
<name>MGSA_CARHZ</name>
<organism>
    <name type="scientific">Carboxydothermus hydrogenoformans (strain ATCC BAA-161 / DSM 6008 / Z-2901)</name>
    <dbReference type="NCBI Taxonomy" id="246194"/>
    <lineage>
        <taxon>Bacteria</taxon>
        <taxon>Bacillati</taxon>
        <taxon>Bacillota</taxon>
        <taxon>Clostridia</taxon>
        <taxon>Thermoanaerobacterales</taxon>
        <taxon>Thermoanaerobacteraceae</taxon>
        <taxon>Carboxydothermus</taxon>
    </lineage>
</organism>
<accession>Q3AEV6</accession>
<dbReference type="EC" id="4.2.3.3" evidence="1"/>
<dbReference type="EMBL" id="CP000141">
    <property type="protein sequence ID" value="ABB14629.1"/>
    <property type="molecule type" value="Genomic_DNA"/>
</dbReference>
<dbReference type="SMR" id="Q3AEV6"/>
<dbReference type="FunCoup" id="Q3AEV6">
    <property type="interactions" value="51"/>
</dbReference>
<dbReference type="STRING" id="246194.CHY_0470"/>
<dbReference type="KEGG" id="chy:CHY_0470"/>
<dbReference type="eggNOG" id="COG1803">
    <property type="taxonomic scope" value="Bacteria"/>
</dbReference>
<dbReference type="HOGENOM" id="CLU_120420_1_0_9"/>
<dbReference type="InParanoid" id="Q3AEV6"/>
<dbReference type="Proteomes" id="UP000002706">
    <property type="component" value="Chromosome"/>
</dbReference>
<dbReference type="GO" id="GO:0005829">
    <property type="term" value="C:cytosol"/>
    <property type="evidence" value="ECO:0007669"/>
    <property type="project" value="TreeGrafter"/>
</dbReference>
<dbReference type="GO" id="GO:0008929">
    <property type="term" value="F:methylglyoxal synthase activity"/>
    <property type="evidence" value="ECO:0007669"/>
    <property type="project" value="UniProtKB-UniRule"/>
</dbReference>
<dbReference type="GO" id="GO:0019242">
    <property type="term" value="P:methylglyoxal biosynthetic process"/>
    <property type="evidence" value="ECO:0007669"/>
    <property type="project" value="UniProtKB-UniRule"/>
</dbReference>
<dbReference type="CDD" id="cd01422">
    <property type="entry name" value="MGS"/>
    <property type="match status" value="1"/>
</dbReference>
<dbReference type="Gene3D" id="3.40.50.1380">
    <property type="entry name" value="Methylglyoxal synthase-like domain"/>
    <property type="match status" value="1"/>
</dbReference>
<dbReference type="HAMAP" id="MF_00549">
    <property type="entry name" value="Methylglyoxal_synth"/>
    <property type="match status" value="1"/>
</dbReference>
<dbReference type="InterPro" id="IPR004363">
    <property type="entry name" value="Methylgl_synth"/>
</dbReference>
<dbReference type="InterPro" id="IPR018148">
    <property type="entry name" value="Methylglyoxal_synth_AS"/>
</dbReference>
<dbReference type="InterPro" id="IPR011607">
    <property type="entry name" value="MGS-like_dom"/>
</dbReference>
<dbReference type="InterPro" id="IPR036914">
    <property type="entry name" value="MGS-like_dom_sf"/>
</dbReference>
<dbReference type="NCBIfam" id="TIGR00160">
    <property type="entry name" value="MGSA"/>
    <property type="match status" value="1"/>
</dbReference>
<dbReference type="NCBIfam" id="NF003559">
    <property type="entry name" value="PRK05234.1"/>
    <property type="match status" value="1"/>
</dbReference>
<dbReference type="PANTHER" id="PTHR30492">
    <property type="entry name" value="METHYLGLYOXAL SYNTHASE"/>
    <property type="match status" value="1"/>
</dbReference>
<dbReference type="PANTHER" id="PTHR30492:SF0">
    <property type="entry name" value="METHYLGLYOXAL SYNTHASE"/>
    <property type="match status" value="1"/>
</dbReference>
<dbReference type="Pfam" id="PF02142">
    <property type="entry name" value="MGS"/>
    <property type="match status" value="1"/>
</dbReference>
<dbReference type="PIRSF" id="PIRSF006614">
    <property type="entry name" value="Methylglyox_syn"/>
    <property type="match status" value="1"/>
</dbReference>
<dbReference type="SMART" id="SM00851">
    <property type="entry name" value="MGS"/>
    <property type="match status" value="1"/>
</dbReference>
<dbReference type="SUPFAM" id="SSF52335">
    <property type="entry name" value="Methylglyoxal synthase-like"/>
    <property type="match status" value="1"/>
</dbReference>
<dbReference type="PROSITE" id="PS01335">
    <property type="entry name" value="METHYLGLYOXAL_SYNTH"/>
    <property type="match status" value="1"/>
</dbReference>
<dbReference type="PROSITE" id="PS51855">
    <property type="entry name" value="MGS"/>
    <property type="match status" value="1"/>
</dbReference>
<gene>
    <name evidence="1" type="primary">mgsA</name>
    <name type="ordered locus">CHY_0470</name>
</gene>
<feature type="chain" id="PRO_1000146623" description="Methylglyoxal synthase">
    <location>
        <begin position="1"/>
        <end position="121"/>
    </location>
</feature>
<feature type="domain" description="MGS-like" evidence="1">
    <location>
        <begin position="1"/>
        <end position="121"/>
    </location>
</feature>
<feature type="active site" description="Proton donor/acceptor" evidence="1">
    <location>
        <position position="61"/>
    </location>
</feature>
<feature type="binding site" evidence="1">
    <location>
        <position position="9"/>
    </location>
    <ligand>
        <name>substrate</name>
    </ligand>
</feature>
<feature type="binding site" evidence="1">
    <location>
        <position position="13"/>
    </location>
    <ligand>
        <name>substrate</name>
    </ligand>
</feature>
<feature type="binding site" evidence="1">
    <location>
        <begin position="35"/>
        <end position="38"/>
    </location>
    <ligand>
        <name>substrate</name>
    </ligand>
</feature>
<feature type="binding site" evidence="1">
    <location>
        <begin position="55"/>
        <end position="56"/>
    </location>
    <ligand>
        <name>substrate</name>
    </ligand>
</feature>
<feature type="binding site" evidence="1">
    <location>
        <position position="88"/>
    </location>
    <ligand>
        <name>substrate</name>
    </ligand>
</feature>
<sequence length="121" mass="13350">MMKVALIAHDDKKDDLLAFVKTHREFFARHELFATGTTGKIISENTGLTVHRFLSGPLGGDQQIGAMVAAGEIKLVIFFRDPLTAQPHEPDITALLRVCDVHNVPIATNWSSAELFLRALN</sequence>
<protein>
    <recommendedName>
        <fullName evidence="1">Methylglyoxal synthase</fullName>
        <shortName evidence="1">MGS</shortName>
        <ecNumber evidence="1">4.2.3.3</ecNumber>
    </recommendedName>
</protein>
<proteinExistence type="inferred from homology"/>